<dbReference type="EMBL" id="Z18629">
    <property type="protein sequence ID" value="CAA79225.1"/>
    <property type="molecule type" value="Genomic_DNA"/>
</dbReference>
<dbReference type="EMBL" id="U56901">
    <property type="protein sequence ID" value="AAC44939.1"/>
    <property type="molecule type" value="Genomic_DNA"/>
</dbReference>
<dbReference type="EMBL" id="AL009126">
    <property type="protein sequence ID" value="CAB15565.1"/>
    <property type="molecule type" value="Genomic_DNA"/>
</dbReference>
<dbReference type="EMBL" id="M23558">
    <property type="status" value="NOT_ANNOTATED_CDS"/>
    <property type="molecule type" value="Genomic_DNA"/>
</dbReference>
<dbReference type="PIR" id="I40386">
    <property type="entry name" value="D30191"/>
</dbReference>
<dbReference type="RefSeq" id="WP_003244125.1">
    <property type="nucleotide sequence ID" value="NZ_OZ025638.1"/>
</dbReference>
<dbReference type="PDB" id="3FYS">
    <property type="method" value="X-ray"/>
    <property type="resolution" value="2.50 A"/>
    <property type="chains" value="A=1-281"/>
</dbReference>
<dbReference type="PDBsum" id="3FYS"/>
<dbReference type="SMR" id="P32436"/>
<dbReference type="FunCoup" id="P32436">
    <property type="interactions" value="123"/>
</dbReference>
<dbReference type="STRING" id="224308.BSU35480"/>
<dbReference type="PaxDb" id="224308-BSU35480"/>
<dbReference type="EnsemblBacteria" id="CAB15565">
    <property type="protein sequence ID" value="CAB15565"/>
    <property type="gene ID" value="BSU_35480"/>
</dbReference>
<dbReference type="GeneID" id="936763"/>
<dbReference type="KEGG" id="bsu:BSU35480"/>
<dbReference type="PATRIC" id="fig|224308.179.peg.3839"/>
<dbReference type="eggNOG" id="COG1307">
    <property type="taxonomic scope" value="Bacteria"/>
</dbReference>
<dbReference type="InParanoid" id="P32436"/>
<dbReference type="OrthoDB" id="9775494at2"/>
<dbReference type="PhylomeDB" id="P32436"/>
<dbReference type="BioCyc" id="BSUB:BSU35480-MONOMER"/>
<dbReference type="EvolutionaryTrace" id="P32436"/>
<dbReference type="Proteomes" id="UP000001570">
    <property type="component" value="Chromosome"/>
</dbReference>
<dbReference type="GO" id="GO:0008289">
    <property type="term" value="F:lipid binding"/>
    <property type="evidence" value="ECO:0007669"/>
    <property type="project" value="UniProtKB-KW"/>
</dbReference>
<dbReference type="Gene3D" id="3.30.1180.10">
    <property type="match status" value="1"/>
</dbReference>
<dbReference type="Gene3D" id="3.40.50.10170">
    <property type="match status" value="1"/>
</dbReference>
<dbReference type="InterPro" id="IPR003797">
    <property type="entry name" value="DegV"/>
</dbReference>
<dbReference type="InterPro" id="IPR043168">
    <property type="entry name" value="DegV_C"/>
</dbReference>
<dbReference type="InterPro" id="IPR050270">
    <property type="entry name" value="DegV_domain_contain"/>
</dbReference>
<dbReference type="NCBIfam" id="TIGR00762">
    <property type="entry name" value="DegV"/>
    <property type="match status" value="1"/>
</dbReference>
<dbReference type="PANTHER" id="PTHR33434">
    <property type="entry name" value="DEGV DOMAIN-CONTAINING PROTEIN DR_1986-RELATED"/>
    <property type="match status" value="1"/>
</dbReference>
<dbReference type="PANTHER" id="PTHR33434:SF2">
    <property type="entry name" value="FATTY ACID-BINDING PROTEIN TM_1468"/>
    <property type="match status" value="1"/>
</dbReference>
<dbReference type="Pfam" id="PF02645">
    <property type="entry name" value="DegV"/>
    <property type="match status" value="1"/>
</dbReference>
<dbReference type="SUPFAM" id="SSF82549">
    <property type="entry name" value="DAK1/DegV-like"/>
    <property type="match status" value="1"/>
</dbReference>
<dbReference type="PROSITE" id="PS51482">
    <property type="entry name" value="DEGV"/>
    <property type="match status" value="1"/>
</dbReference>
<keyword id="KW-0002">3D-structure</keyword>
<keyword id="KW-0446">Lipid-binding</keyword>
<keyword id="KW-1185">Reference proteome</keyword>
<proteinExistence type="evidence at protein level"/>
<accession>P32436</accession>
<evidence type="ECO:0000255" key="1">
    <source>
        <dbReference type="PROSITE-ProRule" id="PRU00815"/>
    </source>
</evidence>
<evidence type="ECO:0000269" key="2">
    <source>
    </source>
</evidence>
<evidence type="ECO:0000269" key="3">
    <source>
    </source>
</evidence>
<evidence type="ECO:0000305" key="4">
    <source>
    </source>
</evidence>
<evidence type="ECO:0007744" key="5">
    <source>
        <dbReference type="PDB" id="3FYS"/>
    </source>
</evidence>
<evidence type="ECO:0007829" key="6">
    <source>
        <dbReference type="PDB" id="3FYS"/>
    </source>
</evidence>
<reference key="1">
    <citation type="journal article" date="1993" name="Mol. Microbiol.">
        <title>comF, a Bacillus subtilis late competence locus, encodes a protein similar to ATP-dependent RNA/DNA helicases.</title>
        <authorList>
            <person name="Londono-Vallejo J.A."/>
            <person name="Dubnau D."/>
        </authorList>
    </citation>
    <scope>NUCLEOTIDE SEQUENCE [GENOMIC DNA]</scope>
    <scope>DISRUPTION PHENOTYPE</scope>
    <source>
        <strain>168</strain>
    </source>
</reference>
<reference key="2">
    <citation type="journal article" date="1996" name="Microbiology">
        <title>Sequence of the 305 degrees-307 degrees region of the Bacillus subtilis chromosome.</title>
        <authorList>
            <person name="Soldo B."/>
            <person name="Lazarevic V."/>
            <person name="Mauel C."/>
            <person name="Karamata D."/>
        </authorList>
    </citation>
    <scope>NUCLEOTIDE SEQUENCE [GENOMIC DNA]</scope>
    <source>
        <strain>168</strain>
    </source>
</reference>
<reference key="3">
    <citation type="journal article" date="1997" name="Nature">
        <title>The complete genome sequence of the Gram-positive bacterium Bacillus subtilis.</title>
        <authorList>
            <person name="Kunst F."/>
            <person name="Ogasawara N."/>
            <person name="Moszer I."/>
            <person name="Albertini A.M."/>
            <person name="Alloni G."/>
            <person name="Azevedo V."/>
            <person name="Bertero M.G."/>
            <person name="Bessieres P."/>
            <person name="Bolotin A."/>
            <person name="Borchert S."/>
            <person name="Borriss R."/>
            <person name="Boursier L."/>
            <person name="Brans A."/>
            <person name="Braun M."/>
            <person name="Brignell S.C."/>
            <person name="Bron S."/>
            <person name="Brouillet S."/>
            <person name="Bruschi C.V."/>
            <person name="Caldwell B."/>
            <person name="Capuano V."/>
            <person name="Carter N.M."/>
            <person name="Choi S.-K."/>
            <person name="Codani J.-J."/>
            <person name="Connerton I.F."/>
            <person name="Cummings N.J."/>
            <person name="Daniel R.A."/>
            <person name="Denizot F."/>
            <person name="Devine K.M."/>
            <person name="Duesterhoeft A."/>
            <person name="Ehrlich S.D."/>
            <person name="Emmerson P.T."/>
            <person name="Entian K.-D."/>
            <person name="Errington J."/>
            <person name="Fabret C."/>
            <person name="Ferrari E."/>
            <person name="Foulger D."/>
            <person name="Fritz C."/>
            <person name="Fujita M."/>
            <person name="Fujita Y."/>
            <person name="Fuma S."/>
            <person name="Galizzi A."/>
            <person name="Galleron N."/>
            <person name="Ghim S.-Y."/>
            <person name="Glaser P."/>
            <person name="Goffeau A."/>
            <person name="Golightly E.J."/>
            <person name="Grandi G."/>
            <person name="Guiseppi G."/>
            <person name="Guy B.J."/>
            <person name="Haga K."/>
            <person name="Haiech J."/>
            <person name="Harwood C.R."/>
            <person name="Henaut A."/>
            <person name="Hilbert H."/>
            <person name="Holsappel S."/>
            <person name="Hosono S."/>
            <person name="Hullo M.-F."/>
            <person name="Itaya M."/>
            <person name="Jones L.-M."/>
            <person name="Joris B."/>
            <person name="Karamata D."/>
            <person name="Kasahara Y."/>
            <person name="Klaerr-Blanchard M."/>
            <person name="Klein C."/>
            <person name="Kobayashi Y."/>
            <person name="Koetter P."/>
            <person name="Koningstein G."/>
            <person name="Krogh S."/>
            <person name="Kumano M."/>
            <person name="Kurita K."/>
            <person name="Lapidus A."/>
            <person name="Lardinois S."/>
            <person name="Lauber J."/>
            <person name="Lazarevic V."/>
            <person name="Lee S.-M."/>
            <person name="Levine A."/>
            <person name="Liu H."/>
            <person name="Masuda S."/>
            <person name="Mauel C."/>
            <person name="Medigue C."/>
            <person name="Medina N."/>
            <person name="Mellado R.P."/>
            <person name="Mizuno M."/>
            <person name="Moestl D."/>
            <person name="Nakai S."/>
            <person name="Noback M."/>
            <person name="Noone D."/>
            <person name="O'Reilly M."/>
            <person name="Ogawa K."/>
            <person name="Ogiwara A."/>
            <person name="Oudega B."/>
            <person name="Park S.-H."/>
            <person name="Parro V."/>
            <person name="Pohl T.M."/>
            <person name="Portetelle D."/>
            <person name="Porwollik S."/>
            <person name="Prescott A.M."/>
            <person name="Presecan E."/>
            <person name="Pujic P."/>
            <person name="Purnelle B."/>
            <person name="Rapoport G."/>
            <person name="Rey M."/>
            <person name="Reynolds S."/>
            <person name="Rieger M."/>
            <person name="Rivolta C."/>
            <person name="Rocha E."/>
            <person name="Roche B."/>
            <person name="Rose M."/>
            <person name="Sadaie Y."/>
            <person name="Sato T."/>
            <person name="Scanlan E."/>
            <person name="Schleich S."/>
            <person name="Schroeter R."/>
            <person name="Scoffone F."/>
            <person name="Sekiguchi J."/>
            <person name="Sekowska A."/>
            <person name="Seror S.J."/>
            <person name="Serror P."/>
            <person name="Shin B.-S."/>
            <person name="Soldo B."/>
            <person name="Sorokin A."/>
            <person name="Tacconi E."/>
            <person name="Takagi T."/>
            <person name="Takahashi H."/>
            <person name="Takemaru K."/>
            <person name="Takeuchi M."/>
            <person name="Tamakoshi A."/>
            <person name="Tanaka T."/>
            <person name="Terpstra P."/>
            <person name="Tognoni A."/>
            <person name="Tosato V."/>
            <person name="Uchiyama S."/>
            <person name="Vandenbol M."/>
            <person name="Vannier F."/>
            <person name="Vassarotti A."/>
            <person name="Viari A."/>
            <person name="Wambutt R."/>
            <person name="Wedler E."/>
            <person name="Wedler H."/>
            <person name="Weitzenegger T."/>
            <person name="Winters P."/>
            <person name="Wipat A."/>
            <person name="Yamamoto H."/>
            <person name="Yamane K."/>
            <person name="Yasumoto K."/>
            <person name="Yata K."/>
            <person name="Yoshida K."/>
            <person name="Yoshikawa H.-F."/>
            <person name="Zumstein E."/>
            <person name="Yoshikawa H."/>
            <person name="Danchin A."/>
        </authorList>
    </citation>
    <scope>NUCLEOTIDE SEQUENCE [LARGE SCALE GENOMIC DNA]</scope>
    <source>
        <strain>168</strain>
    </source>
</reference>
<reference key="4">
    <citation type="journal article" date="1988" name="J. Bacteriol.">
        <title>Localization of Bacillus subtilis sacU(Hy) mutations to two linked genes with similarities to the conserved procaryotic family of two-component signalling systems.</title>
        <authorList>
            <person name="Henner D.J."/>
            <person name="Yang M."/>
            <person name="Ferrari E."/>
        </authorList>
    </citation>
    <scope>NUCLEOTIDE SEQUENCE [GENOMIC DNA] OF 1-107</scope>
</reference>
<reference evidence="5" key="5">
    <citation type="journal article" date="2009" name="Acta Crystallogr. D">
        <title>Structure of a fatty-acid-binding protein from Bacillus subtilis determined by sulfur-SAD phasing using in-house chromium radiation.</title>
        <authorList>
            <person name="Nan J."/>
            <person name="Zhou Y."/>
            <person name="Yang C."/>
            <person name="Brostromer E."/>
            <person name="Kristensen O."/>
            <person name="Su X.D."/>
        </authorList>
    </citation>
    <scope>X-RAY CRYSTALLOGRAPHY (2.50 ANGSTROMS) IN COMPLEX WITH PALMITIC ACID</scope>
    <scope>FUNCTION</scope>
    <scope>SUBUNIT</scope>
</reference>
<gene>
    <name type="primary">degV</name>
    <name type="synonym">yviA</name>
    <name type="ordered locus">BSU35480</name>
</gene>
<comment type="function">
    <text evidence="2">Binds long-chain fatty acids, such as palmitate, and may play a role in lipid transport or fatty acid metabolism.</text>
</comment>
<comment type="subunit">
    <text evidence="4">Monomer.</text>
</comment>
<comment type="disruption phenotype">
    <text evidence="3">No growth phenotype, no effect on competence.</text>
</comment>
<feature type="chain" id="PRO_0000209751" description="Protein DegV">
    <location>
        <begin position="1"/>
        <end position="281"/>
    </location>
</feature>
<feature type="domain" description="DegV" evidence="1">
    <location>
        <begin position="3"/>
        <end position="280"/>
    </location>
</feature>
<feature type="binding site" evidence="2 5">
    <location>
        <position position="61"/>
    </location>
    <ligand>
        <name>hexadecanoate</name>
        <dbReference type="ChEBI" id="CHEBI:7896"/>
    </ligand>
</feature>
<feature type="binding site" evidence="2 5">
    <location>
        <position position="93"/>
    </location>
    <ligand>
        <name>hexadecanoate</name>
        <dbReference type="ChEBI" id="CHEBI:7896"/>
    </ligand>
</feature>
<feature type="strand" evidence="6">
    <location>
        <begin position="3"/>
        <end position="8"/>
    </location>
</feature>
<feature type="helix" evidence="6">
    <location>
        <begin position="9"/>
        <end position="11"/>
    </location>
</feature>
<feature type="helix" evidence="6">
    <location>
        <begin position="15"/>
        <end position="21"/>
    </location>
</feature>
<feature type="strand" evidence="6">
    <location>
        <begin position="23"/>
        <end position="26"/>
    </location>
</feature>
<feature type="strand" evidence="6">
    <location>
        <begin position="29"/>
        <end position="31"/>
    </location>
</feature>
<feature type="strand" evidence="6">
    <location>
        <begin position="36"/>
        <end position="39"/>
    </location>
</feature>
<feature type="turn" evidence="6">
    <location>
        <begin position="40"/>
        <end position="42"/>
    </location>
</feature>
<feature type="helix" evidence="6">
    <location>
        <begin position="45"/>
        <end position="53"/>
    </location>
</feature>
<feature type="turn" evidence="6">
    <location>
        <begin position="54"/>
        <end position="56"/>
    </location>
</feature>
<feature type="strand" evidence="6">
    <location>
        <begin position="60"/>
        <end position="62"/>
    </location>
</feature>
<feature type="helix" evidence="6">
    <location>
        <begin position="66"/>
        <end position="76"/>
    </location>
</feature>
<feature type="turn" evidence="6">
    <location>
        <begin position="77"/>
        <end position="79"/>
    </location>
</feature>
<feature type="strand" evidence="6">
    <location>
        <begin position="81"/>
        <end position="88"/>
    </location>
</feature>
<feature type="turn" evidence="6">
    <location>
        <begin position="90"/>
        <end position="92"/>
    </location>
</feature>
<feature type="helix" evidence="6">
    <location>
        <begin position="95"/>
        <end position="101"/>
    </location>
</feature>
<feature type="helix" evidence="6">
    <location>
        <begin position="102"/>
        <end position="105"/>
    </location>
</feature>
<feature type="strand" evidence="6">
    <location>
        <begin position="110"/>
        <end position="115"/>
    </location>
</feature>
<feature type="helix" evidence="6">
    <location>
        <begin position="120"/>
        <end position="135"/>
    </location>
</feature>
<feature type="helix" evidence="6">
    <location>
        <begin position="141"/>
        <end position="151"/>
    </location>
</feature>
<feature type="turn" evidence="6">
    <location>
        <begin position="152"/>
        <end position="154"/>
    </location>
</feature>
<feature type="strand" evidence="6">
    <location>
        <begin position="156"/>
        <end position="160"/>
    </location>
</feature>
<feature type="helix" evidence="6">
    <location>
        <begin position="165"/>
        <end position="170"/>
    </location>
</feature>
<feature type="turn" evidence="6">
    <location>
        <begin position="171"/>
        <end position="173"/>
    </location>
</feature>
<feature type="helix" evidence="6">
    <location>
        <begin position="174"/>
        <end position="180"/>
    </location>
</feature>
<feature type="strand" evidence="6">
    <location>
        <begin position="188"/>
        <end position="193"/>
    </location>
</feature>
<feature type="strand" evidence="6">
    <location>
        <begin position="196"/>
        <end position="202"/>
    </location>
</feature>
<feature type="helix" evidence="6">
    <location>
        <begin position="206"/>
        <end position="221"/>
    </location>
</feature>
<feature type="strand" evidence="6">
    <location>
        <begin position="227"/>
        <end position="235"/>
    </location>
</feature>
<feature type="helix" evidence="6">
    <location>
        <begin position="237"/>
        <end position="250"/>
    </location>
</feature>
<feature type="strand" evidence="6">
    <location>
        <begin position="254"/>
        <end position="260"/>
    </location>
</feature>
<feature type="helix" evidence="6">
    <location>
        <begin position="263"/>
        <end position="269"/>
    </location>
</feature>
<feature type="strand" evidence="6">
    <location>
        <begin position="274"/>
        <end position="280"/>
    </location>
</feature>
<organism>
    <name type="scientific">Bacillus subtilis (strain 168)</name>
    <dbReference type="NCBI Taxonomy" id="224308"/>
    <lineage>
        <taxon>Bacteria</taxon>
        <taxon>Bacillati</taxon>
        <taxon>Bacillota</taxon>
        <taxon>Bacilli</taxon>
        <taxon>Bacillales</taxon>
        <taxon>Bacillaceae</taxon>
        <taxon>Bacillus</taxon>
    </lineage>
</organism>
<name>DEGV_BACSU</name>
<sequence>MNIAVVTDSTAYIPKEMREQHQIHMIPLQVVFREETYREEIELDWKSFYEEVKKHNELPTTSQPPIGELVALYEELGKSYDAVISIHLSSGISGTFSSAAAADSMVDNIDVYPFDSEISCLAQGFYALKAAELIKNGASSPEDIIKELEEMKKTVRAYFMVDDLAHLQRGGRLSSAQAFIGSLLKVKPILHFDNKVIVPFEKIRTRKKAISRIYELLDEDASKGLPMRAAVIHANREEEAAKIIEELSAKYPHVEFYNSYFGAVIGTHLGEGALGICWCFK</sequence>
<protein>
    <recommendedName>
        <fullName>Protein DegV</fullName>
    </recommendedName>
</protein>